<accession>B1JNC4</accession>
<comment type="function">
    <text evidence="1">Activates expression of the rhaSR operon in response to L-rhamnose.</text>
</comment>
<comment type="subunit">
    <text evidence="1">Binds DNA as a dimer.</text>
</comment>
<comment type="subcellular location">
    <subcellularLocation>
        <location evidence="1">Cytoplasm</location>
    </subcellularLocation>
</comment>
<sequence>MRAPLLLESRDYLLSEQMPVAVTNRYPQETFVEHTHQFCEIVIVWRGNGLHVLNDHPYRITCGDVFYIQAADHHSYESVHDLVLDNIIYCPERLHLNAQWHKLLPPLGPEQNQGYWRLTTQGMAQARPIIQQLAQESRKTDSWSIQLTEVLLLQLAIVLKRHRYRAEQAHLLPDGEQLDLIMSALQQSLGAYFDMANFCHKNQLVERSLKQLFRQQTGMSISHYLRQIRLCHAKCLLRGSEHRISDIAARCGFEDSNYFSAVFTREAGMTPRDYRQRFIRSPVLPTKNEP</sequence>
<protein>
    <recommendedName>
        <fullName evidence="1">HTH-type transcriptional activator RhaR</fullName>
    </recommendedName>
    <alternativeName>
        <fullName evidence="1">L-rhamnose operon transcriptional activator RhaR</fullName>
    </alternativeName>
</protein>
<organism>
    <name type="scientific">Yersinia pseudotuberculosis serotype O:3 (strain YPIII)</name>
    <dbReference type="NCBI Taxonomy" id="502800"/>
    <lineage>
        <taxon>Bacteria</taxon>
        <taxon>Pseudomonadati</taxon>
        <taxon>Pseudomonadota</taxon>
        <taxon>Gammaproteobacteria</taxon>
        <taxon>Enterobacterales</taxon>
        <taxon>Yersiniaceae</taxon>
        <taxon>Yersinia</taxon>
    </lineage>
</organism>
<dbReference type="EMBL" id="CP000950">
    <property type="protein sequence ID" value="ACA70106.1"/>
    <property type="molecule type" value="Genomic_DNA"/>
</dbReference>
<dbReference type="RefSeq" id="WP_012304682.1">
    <property type="nucleotide sequence ID" value="NZ_CP009792.1"/>
</dbReference>
<dbReference type="SMR" id="B1JNC4"/>
<dbReference type="KEGG" id="ypy:YPK_3841"/>
<dbReference type="PATRIC" id="fig|502800.11.peg.187"/>
<dbReference type="GO" id="GO:0005737">
    <property type="term" value="C:cytoplasm"/>
    <property type="evidence" value="ECO:0007669"/>
    <property type="project" value="UniProtKB-SubCell"/>
</dbReference>
<dbReference type="GO" id="GO:0003700">
    <property type="term" value="F:DNA-binding transcription factor activity"/>
    <property type="evidence" value="ECO:0007669"/>
    <property type="project" value="UniProtKB-UniRule"/>
</dbReference>
<dbReference type="GO" id="GO:0043565">
    <property type="term" value="F:sequence-specific DNA binding"/>
    <property type="evidence" value="ECO:0007669"/>
    <property type="project" value="InterPro"/>
</dbReference>
<dbReference type="GO" id="GO:0045893">
    <property type="term" value="P:positive regulation of DNA-templated transcription"/>
    <property type="evidence" value="ECO:0007669"/>
    <property type="project" value="UniProtKB-UniRule"/>
</dbReference>
<dbReference type="GO" id="GO:0019299">
    <property type="term" value="P:rhamnose metabolic process"/>
    <property type="evidence" value="ECO:0007669"/>
    <property type="project" value="UniProtKB-UniRule"/>
</dbReference>
<dbReference type="CDD" id="cd06977">
    <property type="entry name" value="cupin_RhaR_RhaS-like_N"/>
    <property type="match status" value="1"/>
</dbReference>
<dbReference type="Gene3D" id="1.10.10.60">
    <property type="entry name" value="Homeodomain-like"/>
    <property type="match status" value="2"/>
</dbReference>
<dbReference type="Gene3D" id="2.60.120.10">
    <property type="entry name" value="Jelly Rolls"/>
    <property type="match status" value="1"/>
</dbReference>
<dbReference type="HAMAP" id="MF_01533">
    <property type="entry name" value="HTH_type_RhaR"/>
    <property type="match status" value="1"/>
</dbReference>
<dbReference type="InterPro" id="IPR003313">
    <property type="entry name" value="AraC-bd"/>
</dbReference>
<dbReference type="InterPro" id="IPR009057">
    <property type="entry name" value="Homeodomain-like_sf"/>
</dbReference>
<dbReference type="InterPro" id="IPR018060">
    <property type="entry name" value="HTH_AraC"/>
</dbReference>
<dbReference type="InterPro" id="IPR018062">
    <property type="entry name" value="HTH_AraC-typ_CS"/>
</dbReference>
<dbReference type="InterPro" id="IPR047220">
    <property type="entry name" value="RhaR_RhaS-like_N"/>
</dbReference>
<dbReference type="InterPro" id="IPR014710">
    <property type="entry name" value="RmlC-like_jellyroll"/>
</dbReference>
<dbReference type="InterPro" id="IPR011051">
    <property type="entry name" value="RmlC_Cupin_sf"/>
</dbReference>
<dbReference type="InterPro" id="IPR023699">
    <property type="entry name" value="Tscrpt_act_RhaR"/>
</dbReference>
<dbReference type="InterPro" id="IPR020449">
    <property type="entry name" value="Tscrpt_reg_AraC-type_HTH"/>
</dbReference>
<dbReference type="NCBIfam" id="NF010026">
    <property type="entry name" value="PRK13501.1"/>
    <property type="match status" value="1"/>
</dbReference>
<dbReference type="PANTHER" id="PTHR43280">
    <property type="entry name" value="ARAC-FAMILY TRANSCRIPTIONAL REGULATOR"/>
    <property type="match status" value="1"/>
</dbReference>
<dbReference type="PANTHER" id="PTHR43280:SF13">
    <property type="entry name" value="HTH-TYPE TRANSCRIPTIONAL ACTIVATOR RHAR"/>
    <property type="match status" value="1"/>
</dbReference>
<dbReference type="Pfam" id="PF02311">
    <property type="entry name" value="AraC_binding"/>
    <property type="match status" value="1"/>
</dbReference>
<dbReference type="Pfam" id="PF12833">
    <property type="entry name" value="HTH_18"/>
    <property type="match status" value="1"/>
</dbReference>
<dbReference type="PRINTS" id="PR00032">
    <property type="entry name" value="HTHARAC"/>
</dbReference>
<dbReference type="SMART" id="SM00342">
    <property type="entry name" value="HTH_ARAC"/>
    <property type="match status" value="1"/>
</dbReference>
<dbReference type="SUPFAM" id="SSF46689">
    <property type="entry name" value="Homeodomain-like"/>
    <property type="match status" value="1"/>
</dbReference>
<dbReference type="SUPFAM" id="SSF51182">
    <property type="entry name" value="RmlC-like cupins"/>
    <property type="match status" value="1"/>
</dbReference>
<dbReference type="PROSITE" id="PS00041">
    <property type="entry name" value="HTH_ARAC_FAMILY_1"/>
    <property type="match status" value="1"/>
</dbReference>
<dbReference type="PROSITE" id="PS01124">
    <property type="entry name" value="HTH_ARAC_FAMILY_2"/>
    <property type="match status" value="1"/>
</dbReference>
<proteinExistence type="inferred from homology"/>
<feature type="chain" id="PRO_1000200947" description="HTH-type transcriptional activator RhaR">
    <location>
        <begin position="1"/>
        <end position="290"/>
    </location>
</feature>
<feature type="domain" description="HTH araC/xylS-type" evidence="1">
    <location>
        <begin position="179"/>
        <end position="277"/>
    </location>
</feature>
<feature type="DNA-binding region" description="H-T-H motif" evidence="1">
    <location>
        <begin position="196"/>
        <end position="217"/>
    </location>
</feature>
<feature type="DNA-binding region" description="H-T-H motif" evidence="1">
    <location>
        <begin position="244"/>
        <end position="267"/>
    </location>
</feature>
<feature type="site" description="Interaction with sigma-70" evidence="1">
    <location>
        <position position="246"/>
    </location>
</feature>
<reference key="1">
    <citation type="submission" date="2008-02" db="EMBL/GenBank/DDBJ databases">
        <title>Complete sequence of Yersinia pseudotuberculosis YPIII.</title>
        <authorList>
            <consortium name="US DOE Joint Genome Institute"/>
            <person name="Copeland A."/>
            <person name="Lucas S."/>
            <person name="Lapidus A."/>
            <person name="Glavina del Rio T."/>
            <person name="Dalin E."/>
            <person name="Tice H."/>
            <person name="Bruce D."/>
            <person name="Goodwin L."/>
            <person name="Pitluck S."/>
            <person name="Munk A.C."/>
            <person name="Brettin T."/>
            <person name="Detter J.C."/>
            <person name="Han C."/>
            <person name="Tapia R."/>
            <person name="Schmutz J."/>
            <person name="Larimer F."/>
            <person name="Land M."/>
            <person name="Hauser L."/>
            <person name="Challacombe J.F."/>
            <person name="Green L."/>
            <person name="Lindler L.E."/>
            <person name="Nikolich M.P."/>
            <person name="Richardson P."/>
        </authorList>
    </citation>
    <scope>NUCLEOTIDE SEQUENCE [LARGE SCALE GENOMIC DNA]</scope>
    <source>
        <strain>YPIII</strain>
    </source>
</reference>
<name>RHAR_YERPY</name>
<evidence type="ECO:0000255" key="1">
    <source>
        <dbReference type="HAMAP-Rule" id="MF_01533"/>
    </source>
</evidence>
<keyword id="KW-0010">Activator</keyword>
<keyword id="KW-0963">Cytoplasm</keyword>
<keyword id="KW-0238">DNA-binding</keyword>
<keyword id="KW-0677">Repeat</keyword>
<keyword id="KW-0684">Rhamnose metabolism</keyword>
<keyword id="KW-0804">Transcription</keyword>
<keyword id="KW-0805">Transcription regulation</keyword>
<gene>
    <name evidence="1" type="primary">rhaR</name>
    <name type="ordered locus">YPK_3841</name>
</gene>